<feature type="chain" id="PRO_0000068650" description="THAP domain-containing protein 8">
    <location>
        <begin position="1"/>
        <end position="274"/>
    </location>
</feature>
<feature type="zinc finger region" description="THAP-type" evidence="1">
    <location>
        <begin position="1"/>
        <end position="85"/>
    </location>
</feature>
<feature type="region of interest" description="Disordered" evidence="2">
    <location>
        <begin position="83"/>
        <end position="121"/>
    </location>
</feature>
<feature type="sequence variant" id="VAR_034552" description="In dbSNP:rs3810449.">
    <original>R</original>
    <variation>H</variation>
    <location>
        <position position="70"/>
    </location>
</feature>
<feature type="sequence variant" id="VAR_020264" description="In dbSNP:rs3810450.">
    <original>K</original>
    <variation>R</variation>
    <location>
        <position position="112"/>
    </location>
</feature>
<feature type="sequence variant" id="VAR_034553" description="In dbSNP:rs34250145." evidence="4">
    <original>P</original>
    <variation>S</variation>
    <location>
        <position position="157"/>
    </location>
</feature>
<feature type="sequence variant" id="VAR_052288" description="In dbSNP:rs10421966." evidence="3">
    <original>R</original>
    <variation>Q</variation>
    <location>
        <position position="185"/>
    </location>
</feature>
<feature type="sequence variant" id="VAR_052289" description="In dbSNP:rs10420353." evidence="3">
    <original>R</original>
    <variation>W</variation>
    <location>
        <position position="189"/>
    </location>
</feature>
<keyword id="KW-0238">DNA-binding</keyword>
<keyword id="KW-0479">Metal-binding</keyword>
<keyword id="KW-1267">Proteomics identification</keyword>
<keyword id="KW-1185">Reference proteome</keyword>
<keyword id="KW-0862">Zinc</keyword>
<keyword id="KW-0863">Zinc-finger</keyword>
<dbReference type="EMBL" id="AK057453">
    <property type="protein sequence ID" value="BAB71493.1"/>
    <property type="molecule type" value="mRNA"/>
</dbReference>
<dbReference type="EMBL" id="AK093048">
    <property type="protein sequence ID" value="BAC04034.1"/>
    <property type="molecule type" value="mRNA"/>
</dbReference>
<dbReference type="EMBL" id="BC046207">
    <property type="protein sequence ID" value="AAH46207.1"/>
    <property type="molecule type" value="mRNA"/>
</dbReference>
<dbReference type="EMBL" id="BC072416">
    <property type="protein sequence ID" value="AAH72416.1"/>
    <property type="molecule type" value="mRNA"/>
</dbReference>
<dbReference type="CCDS" id="CCDS33000.1"/>
<dbReference type="RefSeq" id="NP_689871.1">
    <property type="nucleotide sequence ID" value="NM_152658.3"/>
</dbReference>
<dbReference type="SMR" id="Q8NA92"/>
<dbReference type="BioGRID" id="128269">
    <property type="interactions" value="32"/>
</dbReference>
<dbReference type="FunCoup" id="Q8NA92">
    <property type="interactions" value="12"/>
</dbReference>
<dbReference type="IntAct" id="Q8NA92">
    <property type="interactions" value="26"/>
</dbReference>
<dbReference type="STRING" id="9606.ENSP00000292894"/>
<dbReference type="GlyGen" id="Q8NA92">
    <property type="glycosylation" value="2 sites"/>
</dbReference>
<dbReference type="iPTMnet" id="Q8NA92"/>
<dbReference type="PhosphoSitePlus" id="Q8NA92"/>
<dbReference type="BioMuta" id="THAP8"/>
<dbReference type="DMDM" id="29839559"/>
<dbReference type="MassIVE" id="Q8NA92"/>
<dbReference type="PaxDb" id="9606-ENSP00000292894"/>
<dbReference type="PeptideAtlas" id="Q8NA92"/>
<dbReference type="ProteomicsDB" id="72658"/>
<dbReference type="Antibodypedia" id="29671">
    <property type="antibodies" value="120 antibodies from 17 providers"/>
</dbReference>
<dbReference type="DNASU" id="199745"/>
<dbReference type="Ensembl" id="ENST00000292894.2">
    <property type="protein sequence ID" value="ENSP00000292894.1"/>
    <property type="gene ID" value="ENSG00000161277.11"/>
</dbReference>
<dbReference type="GeneID" id="199745"/>
<dbReference type="KEGG" id="hsa:199745"/>
<dbReference type="MANE-Select" id="ENST00000292894.2">
    <property type="protein sequence ID" value="ENSP00000292894.1"/>
    <property type="RefSeq nucleotide sequence ID" value="NM_152658.3"/>
    <property type="RefSeq protein sequence ID" value="NP_689871.1"/>
</dbReference>
<dbReference type="UCSC" id="uc002oda.1">
    <property type="organism name" value="human"/>
</dbReference>
<dbReference type="AGR" id="HGNC:23191"/>
<dbReference type="CTD" id="199745"/>
<dbReference type="DisGeNET" id="199745"/>
<dbReference type="GeneCards" id="THAP8"/>
<dbReference type="HGNC" id="HGNC:23191">
    <property type="gene designation" value="THAP8"/>
</dbReference>
<dbReference type="HPA" id="ENSG00000161277">
    <property type="expression patterns" value="Low tissue specificity"/>
</dbReference>
<dbReference type="MalaCards" id="THAP8"/>
<dbReference type="MIM" id="612536">
    <property type="type" value="gene"/>
</dbReference>
<dbReference type="neXtProt" id="NX_Q8NA92"/>
<dbReference type="OpenTargets" id="ENSG00000161277"/>
<dbReference type="PharmGKB" id="PA134973337"/>
<dbReference type="VEuPathDB" id="HostDB:ENSG00000161277"/>
<dbReference type="eggNOG" id="ENOG502S78S">
    <property type="taxonomic scope" value="Eukaryota"/>
</dbReference>
<dbReference type="GeneTree" id="ENSGT00940000163335"/>
<dbReference type="HOGENOM" id="CLU_089335_0_0_1"/>
<dbReference type="InParanoid" id="Q8NA92"/>
<dbReference type="OMA" id="HMGHEDW"/>
<dbReference type="OrthoDB" id="5982876at2759"/>
<dbReference type="PAN-GO" id="Q8NA92">
    <property type="GO annotations" value="0 GO annotations based on evolutionary models"/>
</dbReference>
<dbReference type="PhylomeDB" id="Q8NA92"/>
<dbReference type="TreeFam" id="TF330127"/>
<dbReference type="PathwayCommons" id="Q8NA92"/>
<dbReference type="SignaLink" id="Q8NA92"/>
<dbReference type="BioGRID-ORCS" id="199745">
    <property type="hits" value="12 hits in 1171 CRISPR screens"/>
</dbReference>
<dbReference type="GenomeRNAi" id="199745"/>
<dbReference type="Pharos" id="Q8NA92">
    <property type="development level" value="Tdark"/>
</dbReference>
<dbReference type="PRO" id="PR:Q8NA92"/>
<dbReference type="Proteomes" id="UP000005640">
    <property type="component" value="Chromosome 19"/>
</dbReference>
<dbReference type="RNAct" id="Q8NA92">
    <property type="molecule type" value="protein"/>
</dbReference>
<dbReference type="Bgee" id="ENSG00000161277">
    <property type="expression patterns" value="Expressed in pancreatic ductal cell and 111 other cell types or tissues"/>
</dbReference>
<dbReference type="ExpressionAtlas" id="Q8NA92">
    <property type="expression patterns" value="baseline and differential"/>
</dbReference>
<dbReference type="GO" id="GO:0003677">
    <property type="term" value="F:DNA binding"/>
    <property type="evidence" value="ECO:0007669"/>
    <property type="project" value="UniProtKB-KW"/>
</dbReference>
<dbReference type="GO" id="GO:0008270">
    <property type="term" value="F:zinc ion binding"/>
    <property type="evidence" value="ECO:0007669"/>
    <property type="project" value="UniProtKB-KW"/>
</dbReference>
<dbReference type="InterPro" id="IPR052224">
    <property type="entry name" value="THAP_domain_protein"/>
</dbReference>
<dbReference type="InterPro" id="IPR006612">
    <property type="entry name" value="THAP_Znf"/>
</dbReference>
<dbReference type="PANTHER" id="PTHR46927">
    <property type="entry name" value="AGAP005574-PA"/>
    <property type="match status" value="1"/>
</dbReference>
<dbReference type="PANTHER" id="PTHR46927:SF2">
    <property type="entry name" value="THAP DOMAIN-CONTAINING PROTEIN 8"/>
    <property type="match status" value="1"/>
</dbReference>
<dbReference type="Pfam" id="PF05485">
    <property type="entry name" value="THAP"/>
    <property type="match status" value="1"/>
</dbReference>
<dbReference type="SMART" id="SM00692">
    <property type="entry name" value="DM3"/>
    <property type="match status" value="1"/>
</dbReference>
<dbReference type="SMART" id="SM00980">
    <property type="entry name" value="THAP"/>
    <property type="match status" value="1"/>
</dbReference>
<dbReference type="SUPFAM" id="SSF57716">
    <property type="entry name" value="Glucocorticoid receptor-like (DNA-binding domain)"/>
    <property type="match status" value="1"/>
</dbReference>
<dbReference type="PROSITE" id="PS50950">
    <property type="entry name" value="ZF_THAP"/>
    <property type="match status" value="1"/>
</dbReference>
<protein>
    <recommendedName>
        <fullName>THAP domain-containing protein 8</fullName>
    </recommendedName>
</protein>
<name>THAP8_HUMAN</name>
<organism>
    <name type="scientific">Homo sapiens</name>
    <name type="common">Human</name>
    <dbReference type="NCBI Taxonomy" id="9606"/>
    <lineage>
        <taxon>Eukaryota</taxon>
        <taxon>Metazoa</taxon>
        <taxon>Chordata</taxon>
        <taxon>Craniata</taxon>
        <taxon>Vertebrata</taxon>
        <taxon>Euteleostomi</taxon>
        <taxon>Mammalia</taxon>
        <taxon>Eutheria</taxon>
        <taxon>Euarchontoglires</taxon>
        <taxon>Primates</taxon>
        <taxon>Haplorrhini</taxon>
        <taxon>Catarrhini</taxon>
        <taxon>Hominidae</taxon>
        <taxon>Homo</taxon>
    </lineage>
</organism>
<reference key="1">
    <citation type="journal article" date="2004" name="Nat. Genet.">
        <title>Complete sequencing and characterization of 21,243 full-length human cDNAs.</title>
        <authorList>
            <person name="Ota T."/>
            <person name="Suzuki Y."/>
            <person name="Nishikawa T."/>
            <person name="Otsuki T."/>
            <person name="Sugiyama T."/>
            <person name="Irie R."/>
            <person name="Wakamatsu A."/>
            <person name="Hayashi K."/>
            <person name="Sato H."/>
            <person name="Nagai K."/>
            <person name="Kimura K."/>
            <person name="Makita H."/>
            <person name="Sekine M."/>
            <person name="Obayashi M."/>
            <person name="Nishi T."/>
            <person name="Shibahara T."/>
            <person name="Tanaka T."/>
            <person name="Ishii S."/>
            <person name="Yamamoto J."/>
            <person name="Saito K."/>
            <person name="Kawai Y."/>
            <person name="Isono Y."/>
            <person name="Nakamura Y."/>
            <person name="Nagahari K."/>
            <person name="Murakami K."/>
            <person name="Yasuda T."/>
            <person name="Iwayanagi T."/>
            <person name="Wagatsuma M."/>
            <person name="Shiratori A."/>
            <person name="Sudo H."/>
            <person name="Hosoiri T."/>
            <person name="Kaku Y."/>
            <person name="Kodaira H."/>
            <person name="Kondo H."/>
            <person name="Sugawara M."/>
            <person name="Takahashi M."/>
            <person name="Kanda K."/>
            <person name="Yokoi T."/>
            <person name="Furuya T."/>
            <person name="Kikkawa E."/>
            <person name="Omura Y."/>
            <person name="Abe K."/>
            <person name="Kamihara K."/>
            <person name="Katsuta N."/>
            <person name="Sato K."/>
            <person name="Tanikawa M."/>
            <person name="Yamazaki M."/>
            <person name="Ninomiya K."/>
            <person name="Ishibashi T."/>
            <person name="Yamashita H."/>
            <person name="Murakawa K."/>
            <person name="Fujimori K."/>
            <person name="Tanai H."/>
            <person name="Kimata M."/>
            <person name="Watanabe M."/>
            <person name="Hiraoka S."/>
            <person name="Chiba Y."/>
            <person name="Ishida S."/>
            <person name="Ono Y."/>
            <person name="Takiguchi S."/>
            <person name="Watanabe S."/>
            <person name="Yosida M."/>
            <person name="Hotuta T."/>
            <person name="Kusano J."/>
            <person name="Kanehori K."/>
            <person name="Takahashi-Fujii A."/>
            <person name="Hara H."/>
            <person name="Tanase T.-O."/>
            <person name="Nomura Y."/>
            <person name="Togiya S."/>
            <person name="Komai F."/>
            <person name="Hara R."/>
            <person name="Takeuchi K."/>
            <person name="Arita M."/>
            <person name="Imose N."/>
            <person name="Musashino K."/>
            <person name="Yuuki H."/>
            <person name="Oshima A."/>
            <person name="Sasaki N."/>
            <person name="Aotsuka S."/>
            <person name="Yoshikawa Y."/>
            <person name="Matsunawa H."/>
            <person name="Ichihara T."/>
            <person name="Shiohata N."/>
            <person name="Sano S."/>
            <person name="Moriya S."/>
            <person name="Momiyama H."/>
            <person name="Satoh N."/>
            <person name="Takami S."/>
            <person name="Terashima Y."/>
            <person name="Suzuki O."/>
            <person name="Nakagawa S."/>
            <person name="Senoh A."/>
            <person name="Mizoguchi H."/>
            <person name="Goto Y."/>
            <person name="Shimizu F."/>
            <person name="Wakebe H."/>
            <person name="Hishigaki H."/>
            <person name="Watanabe T."/>
            <person name="Sugiyama A."/>
            <person name="Takemoto M."/>
            <person name="Kawakami B."/>
            <person name="Yamazaki M."/>
            <person name="Watanabe K."/>
            <person name="Kumagai A."/>
            <person name="Itakura S."/>
            <person name="Fukuzumi Y."/>
            <person name="Fujimori Y."/>
            <person name="Komiyama M."/>
            <person name="Tashiro H."/>
            <person name="Tanigami A."/>
            <person name="Fujiwara T."/>
            <person name="Ono T."/>
            <person name="Yamada K."/>
            <person name="Fujii Y."/>
            <person name="Ozaki K."/>
            <person name="Hirao M."/>
            <person name="Ohmori Y."/>
            <person name="Kawabata A."/>
            <person name="Hikiji T."/>
            <person name="Kobatake N."/>
            <person name="Inagaki H."/>
            <person name="Ikema Y."/>
            <person name="Okamoto S."/>
            <person name="Okitani R."/>
            <person name="Kawakami T."/>
            <person name="Noguchi S."/>
            <person name="Itoh T."/>
            <person name="Shigeta K."/>
            <person name="Senba T."/>
            <person name="Matsumura K."/>
            <person name="Nakajima Y."/>
            <person name="Mizuno T."/>
            <person name="Morinaga M."/>
            <person name="Sasaki M."/>
            <person name="Togashi T."/>
            <person name="Oyama M."/>
            <person name="Hata H."/>
            <person name="Watanabe M."/>
            <person name="Komatsu T."/>
            <person name="Mizushima-Sugano J."/>
            <person name="Satoh T."/>
            <person name="Shirai Y."/>
            <person name="Takahashi Y."/>
            <person name="Nakagawa K."/>
            <person name="Okumura K."/>
            <person name="Nagase T."/>
            <person name="Nomura N."/>
            <person name="Kikuchi H."/>
            <person name="Masuho Y."/>
            <person name="Yamashita R."/>
            <person name="Nakai K."/>
            <person name="Yada T."/>
            <person name="Nakamura Y."/>
            <person name="Ohara O."/>
            <person name="Isogai T."/>
            <person name="Sugano S."/>
        </authorList>
    </citation>
    <scope>NUCLEOTIDE SEQUENCE [LARGE SCALE MRNA]</scope>
    <scope>VARIANTS GLN-185 AND TRP-189</scope>
    <source>
        <tissue>Testis</tissue>
    </source>
</reference>
<reference key="2">
    <citation type="journal article" date="2004" name="Genome Res.">
        <title>The status, quality, and expansion of the NIH full-length cDNA project: the Mammalian Gene Collection (MGC).</title>
        <authorList>
            <consortium name="The MGC Project Team"/>
        </authorList>
    </citation>
    <scope>NUCLEOTIDE SEQUENCE [LARGE SCALE MRNA]</scope>
    <scope>VARIANT SER-157</scope>
    <source>
        <tissue>Skin</tissue>
        <tissue>Uterus</tissue>
    </source>
</reference>
<proteinExistence type="evidence at protein level"/>
<evidence type="ECO:0000255" key="1">
    <source>
        <dbReference type="PROSITE-ProRule" id="PRU00309"/>
    </source>
</evidence>
<evidence type="ECO:0000256" key="2">
    <source>
        <dbReference type="SAM" id="MobiDB-lite"/>
    </source>
</evidence>
<evidence type="ECO:0000269" key="3">
    <source>
    </source>
</evidence>
<evidence type="ECO:0000269" key="4">
    <source>
    </source>
</evidence>
<sequence>MPKYCRAPNCSNTAGRLGADNRPVSFYKFPLKDGPRLQAWLQHMGCEHWVPSCHQHLCSEHFTPSCFQWRWGVRYLRPDAVPSIFSRGPPAKSQRRTRSTQKPVSPPPPLQKNTPLPQSPAIPVSGPVRLVVLGPTSGSPKTVATMLLTPLAPAPTPERSQPEVPAQQAQTGLGPVLGALQRRVRRLQRCQERHQAQLQALERLAQQLHGESLLARARRGLQRLTTAQTLGPEESQTFTIICGGPDIAMVLAQDPAPATVDAKPELLDTRIPSA</sequence>
<comment type="interaction">
    <interactant intactId="EBI-717429">
        <id>Q8NA92</id>
    </interactant>
    <interactant intactId="EBI-372942">
        <id>Q13287</id>
        <label>NMI</label>
    </interactant>
    <organismsDiffer>false</organismsDiffer>
    <experiments>3</experiments>
</comment>
<comment type="interaction">
    <interactant intactId="EBI-717429">
        <id>Q8NA92</id>
    </interactant>
    <interactant intactId="EBI-1105213">
        <id>Q9UBB9</id>
        <label>TFIP11</label>
    </interactant>
    <organismsDiffer>false</organismsDiffer>
    <experiments>5</experiments>
</comment>
<accession>Q8NA92</accession>
<accession>Q0P5Z7</accession>
<accession>Q96M21</accession>
<gene>
    <name type="primary">THAP8</name>
</gene>